<comment type="function">
    <text evidence="1">Converts 2C-methyl-D-erythritol 2,4-cyclodiphosphate (ME-2,4cPP) into 1-hydroxy-2-methyl-2-(E)-butenyl 4-diphosphate.</text>
</comment>
<comment type="catalytic activity">
    <reaction evidence="1">
        <text>(2E)-4-hydroxy-3-methylbut-2-enyl diphosphate + oxidized [flavodoxin] + H2O + 2 H(+) = 2-C-methyl-D-erythritol 2,4-cyclic diphosphate + reduced [flavodoxin]</text>
        <dbReference type="Rhea" id="RHEA:43604"/>
        <dbReference type="Rhea" id="RHEA-COMP:10622"/>
        <dbReference type="Rhea" id="RHEA-COMP:10623"/>
        <dbReference type="ChEBI" id="CHEBI:15377"/>
        <dbReference type="ChEBI" id="CHEBI:15378"/>
        <dbReference type="ChEBI" id="CHEBI:57618"/>
        <dbReference type="ChEBI" id="CHEBI:58210"/>
        <dbReference type="ChEBI" id="CHEBI:58483"/>
        <dbReference type="ChEBI" id="CHEBI:128753"/>
        <dbReference type="EC" id="1.17.7.3"/>
    </reaction>
</comment>
<comment type="cofactor">
    <cofactor evidence="1">
        <name>[4Fe-4S] cluster</name>
        <dbReference type="ChEBI" id="CHEBI:49883"/>
    </cofactor>
    <text evidence="1">Binds 1 [4Fe-4S] cluster.</text>
</comment>
<comment type="pathway">
    <text evidence="1">Isoprenoid biosynthesis; isopentenyl diphosphate biosynthesis via DXP pathway; isopentenyl diphosphate from 1-deoxy-D-xylulose 5-phosphate: step 5/6.</text>
</comment>
<comment type="similarity">
    <text evidence="1">Belongs to the IspG family.</text>
</comment>
<feature type="chain" id="PRO_1000011476" description="4-hydroxy-3-methylbut-2-en-1-yl diphosphate synthase (flavodoxin)">
    <location>
        <begin position="1"/>
        <end position="377"/>
    </location>
</feature>
<feature type="binding site" evidence="1">
    <location>
        <position position="275"/>
    </location>
    <ligand>
        <name>[4Fe-4S] cluster</name>
        <dbReference type="ChEBI" id="CHEBI:49883"/>
    </ligand>
</feature>
<feature type="binding site" evidence="1">
    <location>
        <position position="278"/>
    </location>
    <ligand>
        <name>[4Fe-4S] cluster</name>
        <dbReference type="ChEBI" id="CHEBI:49883"/>
    </ligand>
</feature>
<feature type="binding site" evidence="1">
    <location>
        <position position="310"/>
    </location>
    <ligand>
        <name>[4Fe-4S] cluster</name>
        <dbReference type="ChEBI" id="CHEBI:49883"/>
    </ligand>
</feature>
<feature type="binding site" evidence="1">
    <location>
        <position position="317"/>
    </location>
    <ligand>
        <name>[4Fe-4S] cluster</name>
        <dbReference type="ChEBI" id="CHEBI:49883"/>
    </ligand>
</feature>
<reference key="1">
    <citation type="submission" date="2006-02" db="EMBL/GenBank/DDBJ databases">
        <title>Complete sequence of chromosome of Jannaschia sp. CCS1.</title>
        <authorList>
            <consortium name="US DOE Joint Genome Institute"/>
            <person name="Copeland A."/>
            <person name="Lucas S."/>
            <person name="Lapidus A."/>
            <person name="Barry K."/>
            <person name="Detter J.C."/>
            <person name="Glavina del Rio T."/>
            <person name="Hammon N."/>
            <person name="Israni S."/>
            <person name="Pitluck S."/>
            <person name="Brettin T."/>
            <person name="Bruce D."/>
            <person name="Han C."/>
            <person name="Tapia R."/>
            <person name="Gilna P."/>
            <person name="Chertkov O."/>
            <person name="Saunders E."/>
            <person name="Schmutz J."/>
            <person name="Larimer F."/>
            <person name="Land M."/>
            <person name="Kyrpides N."/>
            <person name="Lykidis A."/>
            <person name="Moran M.A."/>
            <person name="Belas R."/>
            <person name="Ye W."/>
            <person name="Buchan A."/>
            <person name="Gonzalez J.M."/>
            <person name="Schell M.A."/>
            <person name="Richardson P."/>
        </authorList>
    </citation>
    <scope>NUCLEOTIDE SEQUENCE [LARGE SCALE GENOMIC DNA]</scope>
    <source>
        <strain>CCS1</strain>
    </source>
</reference>
<proteinExistence type="inferred from homology"/>
<gene>
    <name evidence="1" type="primary">ispG</name>
    <name type="ordered locus">Jann_1935</name>
</gene>
<organism>
    <name type="scientific">Jannaschia sp. (strain CCS1)</name>
    <dbReference type="NCBI Taxonomy" id="290400"/>
    <lineage>
        <taxon>Bacteria</taxon>
        <taxon>Pseudomonadati</taxon>
        <taxon>Pseudomonadota</taxon>
        <taxon>Alphaproteobacteria</taxon>
        <taxon>Rhodobacterales</taxon>
        <taxon>Roseobacteraceae</taxon>
        <taxon>Jannaschia</taxon>
    </lineage>
</organism>
<sequence>MSHNPIRPWRNIDRRKSRQIMVGNVPVGGDAPITVQTMTNTLTTDASATIKQVIAAAEAGADIVRVSVPDADSARAMHEICRESPVPIVADIHFHYKRGIEAAEAGAACLRINPGNIGDAARVKEVVKAARDHNCSIRIGVNAGSLEKHLLEKYGEPCPDAMVESGMDHIKLLEDNDFHEFKISMKASDIFMTAAAYQQLADQTDAPFHMGITEAGGFVGGTVKSAIGLGNLLWAGIGDTMRVSLSADPVEEVKIGFEILKSLGLRHRGVNIISCPSCARQGFDVIKTVEVLEQRLEHIKTPMSLSIIGCVVNGPGEALMTDVGFTGGGAGSGMVYLAGKQSHKMSNEQMVDHIVEQVEKRAEAIEAQAKAADQAAE</sequence>
<evidence type="ECO:0000255" key="1">
    <source>
        <dbReference type="HAMAP-Rule" id="MF_00159"/>
    </source>
</evidence>
<dbReference type="EC" id="1.17.7.3" evidence="1"/>
<dbReference type="EMBL" id="CP000264">
    <property type="protein sequence ID" value="ABD54852.1"/>
    <property type="molecule type" value="Genomic_DNA"/>
</dbReference>
<dbReference type="RefSeq" id="WP_011455057.1">
    <property type="nucleotide sequence ID" value="NC_007802.1"/>
</dbReference>
<dbReference type="SMR" id="Q28R10"/>
<dbReference type="STRING" id="290400.Jann_1935"/>
<dbReference type="KEGG" id="jan:Jann_1935"/>
<dbReference type="eggNOG" id="COG0821">
    <property type="taxonomic scope" value="Bacteria"/>
</dbReference>
<dbReference type="HOGENOM" id="CLU_042258_0_0_5"/>
<dbReference type="OrthoDB" id="9803214at2"/>
<dbReference type="UniPathway" id="UPA00056">
    <property type="reaction ID" value="UER00096"/>
</dbReference>
<dbReference type="Proteomes" id="UP000008326">
    <property type="component" value="Chromosome"/>
</dbReference>
<dbReference type="GO" id="GO:0051539">
    <property type="term" value="F:4 iron, 4 sulfur cluster binding"/>
    <property type="evidence" value="ECO:0007669"/>
    <property type="project" value="UniProtKB-UniRule"/>
</dbReference>
<dbReference type="GO" id="GO:0046429">
    <property type="term" value="F:4-hydroxy-3-methylbut-2-en-1-yl diphosphate synthase activity (ferredoxin)"/>
    <property type="evidence" value="ECO:0007669"/>
    <property type="project" value="UniProtKB-UniRule"/>
</dbReference>
<dbReference type="GO" id="GO:0141197">
    <property type="term" value="F:4-hydroxy-3-methylbut-2-enyl-diphosphate synthase activity (flavodoxin)"/>
    <property type="evidence" value="ECO:0007669"/>
    <property type="project" value="UniProtKB-EC"/>
</dbReference>
<dbReference type="GO" id="GO:0005506">
    <property type="term" value="F:iron ion binding"/>
    <property type="evidence" value="ECO:0007669"/>
    <property type="project" value="InterPro"/>
</dbReference>
<dbReference type="GO" id="GO:0019288">
    <property type="term" value="P:isopentenyl diphosphate biosynthetic process, methylerythritol 4-phosphate pathway"/>
    <property type="evidence" value="ECO:0007669"/>
    <property type="project" value="UniProtKB-UniRule"/>
</dbReference>
<dbReference type="GO" id="GO:0016114">
    <property type="term" value="P:terpenoid biosynthetic process"/>
    <property type="evidence" value="ECO:0007669"/>
    <property type="project" value="InterPro"/>
</dbReference>
<dbReference type="CDD" id="cd00945">
    <property type="entry name" value="Aldolase_Class_I"/>
    <property type="match status" value="1"/>
</dbReference>
<dbReference type="FunFam" id="3.20.20.20:FF:000001">
    <property type="entry name" value="4-hydroxy-3-methylbut-2-en-1-yl diphosphate synthase (flavodoxin)"/>
    <property type="match status" value="1"/>
</dbReference>
<dbReference type="Gene3D" id="3.20.20.20">
    <property type="entry name" value="Dihydropteroate synthase-like"/>
    <property type="match status" value="1"/>
</dbReference>
<dbReference type="Gene3D" id="3.30.413.10">
    <property type="entry name" value="Sulfite Reductase Hemoprotein, domain 1"/>
    <property type="match status" value="1"/>
</dbReference>
<dbReference type="HAMAP" id="MF_00159">
    <property type="entry name" value="IspG"/>
    <property type="match status" value="1"/>
</dbReference>
<dbReference type="InterPro" id="IPR011005">
    <property type="entry name" value="Dihydropteroate_synth-like_sf"/>
</dbReference>
<dbReference type="InterPro" id="IPR016425">
    <property type="entry name" value="IspG_bac"/>
</dbReference>
<dbReference type="InterPro" id="IPR004588">
    <property type="entry name" value="IspG_bac-typ"/>
</dbReference>
<dbReference type="InterPro" id="IPR045854">
    <property type="entry name" value="NO2/SO3_Rdtase_4Fe4S_sf"/>
</dbReference>
<dbReference type="NCBIfam" id="TIGR00612">
    <property type="entry name" value="ispG_gcpE"/>
    <property type="match status" value="1"/>
</dbReference>
<dbReference type="NCBIfam" id="NF001540">
    <property type="entry name" value="PRK00366.1"/>
    <property type="match status" value="1"/>
</dbReference>
<dbReference type="PANTHER" id="PTHR30454">
    <property type="entry name" value="4-HYDROXY-3-METHYLBUT-2-EN-1-YL DIPHOSPHATE SYNTHASE"/>
    <property type="match status" value="1"/>
</dbReference>
<dbReference type="PANTHER" id="PTHR30454:SF0">
    <property type="entry name" value="4-HYDROXY-3-METHYLBUT-2-EN-1-YL DIPHOSPHATE SYNTHASE (FERREDOXIN), CHLOROPLASTIC"/>
    <property type="match status" value="1"/>
</dbReference>
<dbReference type="Pfam" id="PF04551">
    <property type="entry name" value="GcpE"/>
    <property type="match status" value="1"/>
</dbReference>
<dbReference type="PIRSF" id="PIRSF004640">
    <property type="entry name" value="IspG"/>
    <property type="match status" value="1"/>
</dbReference>
<dbReference type="SUPFAM" id="SSF51412">
    <property type="entry name" value="Inosine monophosphate dehydrogenase (IMPDH)"/>
    <property type="match status" value="1"/>
</dbReference>
<dbReference type="SUPFAM" id="SSF56014">
    <property type="entry name" value="Nitrite and sulphite reductase 4Fe-4S domain-like"/>
    <property type="match status" value="1"/>
</dbReference>
<protein>
    <recommendedName>
        <fullName evidence="1">4-hydroxy-3-methylbut-2-en-1-yl diphosphate synthase (flavodoxin)</fullName>
        <ecNumber evidence="1">1.17.7.3</ecNumber>
    </recommendedName>
    <alternativeName>
        <fullName evidence="1">1-hydroxy-2-methyl-2-(E)-butenyl 4-diphosphate synthase</fullName>
    </alternativeName>
</protein>
<name>ISPG_JANSC</name>
<accession>Q28R10</accession>
<keyword id="KW-0004">4Fe-4S</keyword>
<keyword id="KW-0408">Iron</keyword>
<keyword id="KW-0411">Iron-sulfur</keyword>
<keyword id="KW-0414">Isoprene biosynthesis</keyword>
<keyword id="KW-0479">Metal-binding</keyword>
<keyword id="KW-0560">Oxidoreductase</keyword>
<keyword id="KW-1185">Reference proteome</keyword>